<comment type="function">
    <text evidence="1">The alpha subunit is responsible for the aldol cleavage of indoleglycerol phosphate to indole and glyceraldehyde 3-phosphate.</text>
</comment>
<comment type="catalytic activity">
    <reaction evidence="1">
        <text>(1S,2R)-1-C-(indol-3-yl)glycerol 3-phosphate + L-serine = D-glyceraldehyde 3-phosphate + L-tryptophan + H2O</text>
        <dbReference type="Rhea" id="RHEA:10532"/>
        <dbReference type="ChEBI" id="CHEBI:15377"/>
        <dbReference type="ChEBI" id="CHEBI:33384"/>
        <dbReference type="ChEBI" id="CHEBI:57912"/>
        <dbReference type="ChEBI" id="CHEBI:58866"/>
        <dbReference type="ChEBI" id="CHEBI:59776"/>
        <dbReference type="EC" id="4.2.1.20"/>
    </reaction>
</comment>
<comment type="pathway">
    <text evidence="1">Amino-acid biosynthesis; L-tryptophan biosynthesis; L-tryptophan from chorismate: step 5/5.</text>
</comment>
<comment type="subunit">
    <text evidence="1">Tetramer of two alpha and two beta chains.</text>
</comment>
<comment type="similarity">
    <text evidence="1">Belongs to the TrpA family.</text>
</comment>
<feature type="chain" id="PRO_1000095722" description="Tryptophan synthase alpha chain">
    <location>
        <begin position="1"/>
        <end position="262"/>
    </location>
</feature>
<feature type="active site" description="Proton acceptor" evidence="1">
    <location>
        <position position="48"/>
    </location>
</feature>
<feature type="active site" description="Proton acceptor" evidence="1">
    <location>
        <position position="59"/>
    </location>
</feature>
<evidence type="ECO:0000255" key="1">
    <source>
        <dbReference type="HAMAP-Rule" id="MF_00131"/>
    </source>
</evidence>
<protein>
    <recommendedName>
        <fullName evidence="1">Tryptophan synthase alpha chain</fullName>
        <ecNumber evidence="1">4.2.1.20</ecNumber>
    </recommendedName>
</protein>
<accession>B2UV41</accession>
<keyword id="KW-0028">Amino-acid biosynthesis</keyword>
<keyword id="KW-0057">Aromatic amino acid biosynthesis</keyword>
<keyword id="KW-0456">Lyase</keyword>
<keyword id="KW-0822">Tryptophan biosynthesis</keyword>
<organism>
    <name type="scientific">Helicobacter pylori (strain Shi470)</name>
    <dbReference type="NCBI Taxonomy" id="512562"/>
    <lineage>
        <taxon>Bacteria</taxon>
        <taxon>Pseudomonadati</taxon>
        <taxon>Campylobacterota</taxon>
        <taxon>Epsilonproteobacteria</taxon>
        <taxon>Campylobacterales</taxon>
        <taxon>Helicobacteraceae</taxon>
        <taxon>Helicobacter</taxon>
    </lineage>
</organism>
<sequence>MRYKNMFETLKKQEKMAFIPFVTLGDPNYALSFEIVKTLIASGVSALELGFAFSDPVADGVTIQASHLRALKHASMAKNFQLLRAIRDYNPHIPIGLLAYANLIFSYGVDNFYAQIKECGVDSVLIADMPLIEKELVLKSAQKHQIKQIFIASPNASNKDLERAAMHSQGYIYTLARSGVTGASRILENDASAIIKTLKTFSPTPALLGFGISKKEHIKNAKGMGADGVICGSALVKIIEENLNDENAMLERIKGFIGEMIS</sequence>
<name>TRPA_HELPS</name>
<proteinExistence type="inferred from homology"/>
<dbReference type="EC" id="4.2.1.20" evidence="1"/>
<dbReference type="EMBL" id="CP001072">
    <property type="protein sequence ID" value="ACD48723.1"/>
    <property type="molecule type" value="Genomic_DNA"/>
</dbReference>
<dbReference type="RefSeq" id="WP_001269605.1">
    <property type="nucleotide sequence ID" value="NC_010698.2"/>
</dbReference>
<dbReference type="SMR" id="B2UV41"/>
<dbReference type="KEGG" id="hps:HPSH_06615"/>
<dbReference type="HOGENOM" id="CLU_016734_0_4_7"/>
<dbReference type="UniPathway" id="UPA00035">
    <property type="reaction ID" value="UER00044"/>
</dbReference>
<dbReference type="GO" id="GO:0005829">
    <property type="term" value="C:cytosol"/>
    <property type="evidence" value="ECO:0007669"/>
    <property type="project" value="TreeGrafter"/>
</dbReference>
<dbReference type="GO" id="GO:0004834">
    <property type="term" value="F:tryptophan synthase activity"/>
    <property type="evidence" value="ECO:0007669"/>
    <property type="project" value="UniProtKB-UniRule"/>
</dbReference>
<dbReference type="CDD" id="cd04724">
    <property type="entry name" value="Tryptophan_synthase_alpha"/>
    <property type="match status" value="1"/>
</dbReference>
<dbReference type="FunFam" id="3.20.20.70:FF:000037">
    <property type="entry name" value="Tryptophan synthase alpha chain"/>
    <property type="match status" value="1"/>
</dbReference>
<dbReference type="Gene3D" id="3.20.20.70">
    <property type="entry name" value="Aldolase class I"/>
    <property type="match status" value="1"/>
</dbReference>
<dbReference type="HAMAP" id="MF_00131">
    <property type="entry name" value="Trp_synth_alpha"/>
    <property type="match status" value="1"/>
</dbReference>
<dbReference type="InterPro" id="IPR013785">
    <property type="entry name" value="Aldolase_TIM"/>
</dbReference>
<dbReference type="InterPro" id="IPR011060">
    <property type="entry name" value="RibuloseP-bd_barrel"/>
</dbReference>
<dbReference type="InterPro" id="IPR018204">
    <property type="entry name" value="Trp_synthase_alpha_AS"/>
</dbReference>
<dbReference type="InterPro" id="IPR002028">
    <property type="entry name" value="Trp_synthase_suA"/>
</dbReference>
<dbReference type="NCBIfam" id="TIGR00262">
    <property type="entry name" value="trpA"/>
    <property type="match status" value="1"/>
</dbReference>
<dbReference type="PANTHER" id="PTHR43406:SF1">
    <property type="entry name" value="TRYPTOPHAN SYNTHASE ALPHA CHAIN, CHLOROPLASTIC"/>
    <property type="match status" value="1"/>
</dbReference>
<dbReference type="PANTHER" id="PTHR43406">
    <property type="entry name" value="TRYPTOPHAN SYNTHASE, ALPHA CHAIN"/>
    <property type="match status" value="1"/>
</dbReference>
<dbReference type="Pfam" id="PF00290">
    <property type="entry name" value="Trp_syntA"/>
    <property type="match status" value="1"/>
</dbReference>
<dbReference type="SUPFAM" id="SSF51366">
    <property type="entry name" value="Ribulose-phoshate binding barrel"/>
    <property type="match status" value="1"/>
</dbReference>
<dbReference type="PROSITE" id="PS00167">
    <property type="entry name" value="TRP_SYNTHASE_ALPHA"/>
    <property type="match status" value="1"/>
</dbReference>
<gene>
    <name evidence="1" type="primary">trpA</name>
    <name type="ordered locus">HPSH_06615</name>
</gene>
<reference key="1">
    <citation type="submission" date="2008-05" db="EMBL/GenBank/DDBJ databases">
        <title>Genome sequence of Helicobacter pylori from the remote Amazon: traces of Asian ancestry of the first Americans.</title>
        <authorList>
            <person name="Kersulyte D."/>
            <person name="Kalia A."/>
            <person name="Gilman R.H."/>
            <person name="Berg D.E."/>
        </authorList>
    </citation>
    <scope>NUCLEOTIDE SEQUENCE [LARGE SCALE GENOMIC DNA]</scope>
    <source>
        <strain>Shi470</strain>
    </source>
</reference>